<organism>
    <name type="scientific">Bacillus cereus (strain G9842)</name>
    <dbReference type="NCBI Taxonomy" id="405531"/>
    <lineage>
        <taxon>Bacteria</taxon>
        <taxon>Bacillati</taxon>
        <taxon>Bacillota</taxon>
        <taxon>Bacilli</taxon>
        <taxon>Bacillales</taxon>
        <taxon>Bacillaceae</taxon>
        <taxon>Bacillus</taxon>
        <taxon>Bacillus cereus group</taxon>
    </lineage>
</organism>
<keyword id="KW-0067">ATP-binding</keyword>
<keyword id="KW-0143">Chaperone</keyword>
<keyword id="KW-0963">Cytoplasm</keyword>
<keyword id="KW-0413">Isomerase</keyword>
<keyword id="KW-0547">Nucleotide-binding</keyword>
<comment type="function">
    <text evidence="1">Together with its co-chaperonin GroES, plays an essential role in assisting protein folding. The GroEL-GroES system forms a nano-cage that allows encapsulation of the non-native substrate proteins and provides a physical environment optimized to promote and accelerate protein folding.</text>
</comment>
<comment type="catalytic activity">
    <reaction evidence="1">
        <text>ATP + H2O + a folded polypeptide = ADP + phosphate + an unfolded polypeptide.</text>
        <dbReference type="EC" id="5.6.1.7"/>
    </reaction>
</comment>
<comment type="subunit">
    <text evidence="1">Forms a cylinder of 14 subunits composed of two heptameric rings stacked back-to-back. Interacts with the co-chaperonin GroES.</text>
</comment>
<comment type="subcellular location">
    <subcellularLocation>
        <location evidence="1">Cytoplasm</location>
    </subcellularLocation>
</comment>
<comment type="similarity">
    <text evidence="1">Belongs to the chaperonin (HSP60) family.</text>
</comment>
<proteinExistence type="inferred from homology"/>
<dbReference type="EC" id="5.6.1.7" evidence="1"/>
<dbReference type="EMBL" id="CP001186">
    <property type="protein sequence ID" value="ACK97956.1"/>
    <property type="molecule type" value="Genomic_DNA"/>
</dbReference>
<dbReference type="RefSeq" id="WP_001029992.1">
    <property type="nucleotide sequence ID" value="NC_011772.1"/>
</dbReference>
<dbReference type="SMR" id="B7IUT0"/>
<dbReference type="GeneID" id="72447092"/>
<dbReference type="KEGG" id="bcg:BCG9842_B5026"/>
<dbReference type="HOGENOM" id="CLU_016503_3_0_9"/>
<dbReference type="Proteomes" id="UP000006744">
    <property type="component" value="Chromosome"/>
</dbReference>
<dbReference type="GO" id="GO:0005737">
    <property type="term" value="C:cytoplasm"/>
    <property type="evidence" value="ECO:0007669"/>
    <property type="project" value="UniProtKB-SubCell"/>
</dbReference>
<dbReference type="GO" id="GO:0005524">
    <property type="term" value="F:ATP binding"/>
    <property type="evidence" value="ECO:0007669"/>
    <property type="project" value="UniProtKB-UniRule"/>
</dbReference>
<dbReference type="GO" id="GO:0140662">
    <property type="term" value="F:ATP-dependent protein folding chaperone"/>
    <property type="evidence" value="ECO:0007669"/>
    <property type="project" value="InterPro"/>
</dbReference>
<dbReference type="GO" id="GO:0016853">
    <property type="term" value="F:isomerase activity"/>
    <property type="evidence" value="ECO:0007669"/>
    <property type="project" value="UniProtKB-KW"/>
</dbReference>
<dbReference type="GO" id="GO:0051082">
    <property type="term" value="F:unfolded protein binding"/>
    <property type="evidence" value="ECO:0007669"/>
    <property type="project" value="UniProtKB-UniRule"/>
</dbReference>
<dbReference type="GO" id="GO:0042026">
    <property type="term" value="P:protein refolding"/>
    <property type="evidence" value="ECO:0007669"/>
    <property type="project" value="UniProtKB-UniRule"/>
</dbReference>
<dbReference type="CDD" id="cd03344">
    <property type="entry name" value="GroEL"/>
    <property type="match status" value="1"/>
</dbReference>
<dbReference type="FunFam" id="1.10.560.10:FF:000001">
    <property type="entry name" value="60 kDa chaperonin"/>
    <property type="match status" value="1"/>
</dbReference>
<dbReference type="FunFam" id="3.50.7.10:FF:000001">
    <property type="entry name" value="60 kDa chaperonin"/>
    <property type="match status" value="1"/>
</dbReference>
<dbReference type="Gene3D" id="3.50.7.10">
    <property type="entry name" value="GroEL"/>
    <property type="match status" value="1"/>
</dbReference>
<dbReference type="Gene3D" id="1.10.560.10">
    <property type="entry name" value="GroEL-like equatorial domain"/>
    <property type="match status" value="1"/>
</dbReference>
<dbReference type="Gene3D" id="3.30.260.10">
    <property type="entry name" value="TCP-1-like chaperonin intermediate domain"/>
    <property type="match status" value="1"/>
</dbReference>
<dbReference type="HAMAP" id="MF_00600">
    <property type="entry name" value="CH60"/>
    <property type="match status" value="1"/>
</dbReference>
<dbReference type="InterPro" id="IPR018370">
    <property type="entry name" value="Chaperonin_Cpn60_CS"/>
</dbReference>
<dbReference type="InterPro" id="IPR001844">
    <property type="entry name" value="Cpn60/GroEL"/>
</dbReference>
<dbReference type="InterPro" id="IPR002423">
    <property type="entry name" value="Cpn60/GroEL/TCP-1"/>
</dbReference>
<dbReference type="InterPro" id="IPR027409">
    <property type="entry name" value="GroEL-like_apical_dom_sf"/>
</dbReference>
<dbReference type="InterPro" id="IPR027413">
    <property type="entry name" value="GROEL-like_equatorial_sf"/>
</dbReference>
<dbReference type="InterPro" id="IPR027410">
    <property type="entry name" value="TCP-1-like_intermed_sf"/>
</dbReference>
<dbReference type="NCBIfam" id="TIGR02348">
    <property type="entry name" value="GroEL"/>
    <property type="match status" value="1"/>
</dbReference>
<dbReference type="NCBIfam" id="NF000592">
    <property type="entry name" value="PRK00013.1"/>
    <property type="match status" value="1"/>
</dbReference>
<dbReference type="NCBIfam" id="NF009487">
    <property type="entry name" value="PRK12849.1"/>
    <property type="match status" value="1"/>
</dbReference>
<dbReference type="NCBIfam" id="NF009488">
    <property type="entry name" value="PRK12850.1"/>
    <property type="match status" value="1"/>
</dbReference>
<dbReference type="NCBIfam" id="NF009489">
    <property type="entry name" value="PRK12851.1"/>
    <property type="match status" value="1"/>
</dbReference>
<dbReference type="PANTHER" id="PTHR45633">
    <property type="entry name" value="60 KDA HEAT SHOCK PROTEIN, MITOCHONDRIAL"/>
    <property type="match status" value="1"/>
</dbReference>
<dbReference type="Pfam" id="PF00118">
    <property type="entry name" value="Cpn60_TCP1"/>
    <property type="match status" value="1"/>
</dbReference>
<dbReference type="PRINTS" id="PR00298">
    <property type="entry name" value="CHAPERONIN60"/>
</dbReference>
<dbReference type="SUPFAM" id="SSF52029">
    <property type="entry name" value="GroEL apical domain-like"/>
    <property type="match status" value="1"/>
</dbReference>
<dbReference type="SUPFAM" id="SSF48592">
    <property type="entry name" value="GroEL equatorial domain-like"/>
    <property type="match status" value="1"/>
</dbReference>
<dbReference type="SUPFAM" id="SSF54849">
    <property type="entry name" value="GroEL-intermediate domain like"/>
    <property type="match status" value="1"/>
</dbReference>
<dbReference type="PROSITE" id="PS00296">
    <property type="entry name" value="CHAPERONINS_CPN60"/>
    <property type="match status" value="1"/>
</dbReference>
<protein>
    <recommendedName>
        <fullName evidence="1">Chaperonin GroEL</fullName>
        <ecNumber evidence="1">5.6.1.7</ecNumber>
    </recommendedName>
    <alternativeName>
        <fullName evidence="1">60 kDa chaperonin</fullName>
    </alternativeName>
    <alternativeName>
        <fullName evidence="1">Chaperonin-60</fullName>
        <shortName evidence="1">Cpn60</shortName>
    </alternativeName>
</protein>
<evidence type="ECO:0000255" key="1">
    <source>
        <dbReference type="HAMAP-Rule" id="MF_00600"/>
    </source>
</evidence>
<accession>B7IUT0</accession>
<reference key="1">
    <citation type="submission" date="2008-10" db="EMBL/GenBank/DDBJ databases">
        <title>Genome sequence of Bacillus cereus G9842.</title>
        <authorList>
            <person name="Dodson R.J."/>
            <person name="Durkin A.S."/>
            <person name="Rosovitz M.J."/>
            <person name="Rasko D.A."/>
            <person name="Hoffmaster A."/>
            <person name="Ravel J."/>
            <person name="Sutton G."/>
        </authorList>
    </citation>
    <scope>NUCLEOTIDE SEQUENCE [LARGE SCALE GENOMIC DNA]</scope>
    <source>
        <strain>G9842</strain>
    </source>
</reference>
<feature type="chain" id="PRO_1000129972" description="Chaperonin GroEL">
    <location>
        <begin position="1"/>
        <end position="544"/>
    </location>
</feature>
<feature type="binding site" evidence="1">
    <location>
        <begin position="29"/>
        <end position="32"/>
    </location>
    <ligand>
        <name>ATP</name>
        <dbReference type="ChEBI" id="CHEBI:30616"/>
    </ligand>
</feature>
<feature type="binding site" evidence="1">
    <location>
        <begin position="86"/>
        <end position="90"/>
    </location>
    <ligand>
        <name>ATP</name>
        <dbReference type="ChEBI" id="CHEBI:30616"/>
    </ligand>
</feature>
<feature type="binding site" evidence="1">
    <location>
        <position position="413"/>
    </location>
    <ligand>
        <name>ATP</name>
        <dbReference type="ChEBI" id="CHEBI:30616"/>
    </ligand>
</feature>
<feature type="binding site" evidence="1">
    <location>
        <begin position="476"/>
        <end position="478"/>
    </location>
    <ligand>
        <name>ATP</name>
        <dbReference type="ChEBI" id="CHEBI:30616"/>
    </ligand>
</feature>
<feature type="binding site" evidence="1">
    <location>
        <position position="492"/>
    </location>
    <ligand>
        <name>ATP</name>
        <dbReference type="ChEBI" id="CHEBI:30616"/>
    </ligand>
</feature>
<gene>
    <name evidence="1" type="primary">groEL</name>
    <name evidence="1" type="synonym">groL</name>
    <name type="ordered locus">BCG9842_B5026</name>
</gene>
<sequence>MAKDIKFSEEARRSMLRGVDTLANAVKVTLGPKGRNVVLEKKFGSPLITNDGVTIAKEIELEDAFENMGAKLVAEVASKTNDVAGDGTTTATVLAQAMIREGLKNVTAGANPMGLRKGIEKAVTAAIEELKTISKPIEGKSSIAQVAAISAADEEVGQLIAEAMERVGNDGVITLEESKGFTTELDVVEGMQFDRGYASPYMITDSDKMEAVLDNPYILITDKKISNIQEILPVLEQVVQQGKPLLIIAEDVEGEALATLVVNKLRGTFNVVAVKAPGFGDRRKAMLEDIAILTGGEVITEELGRDLKSATVESLGRAGKVVVTKENTTVVEGIGNTEQIAARIGQIRAQLEETTSEFDREKLQERLAKLAGGVAVIKVGAATETELKERKLRIEDALNSTRAAVEEGIVAGGGTSLMNVYTKVASIVAEGDEATGINIVLRALEEPVRQIAINAGLEGSVVVERLKGEKVGVGFNAATGEWVNMLESGIVDPAKVTRSALQNAASVAAMFLTTEAVVADKPEPNAPAMPDMGGMGMGGMGGMM</sequence>
<name>CH60_BACC2</name>